<proteinExistence type="inferred from homology"/>
<reference key="1">
    <citation type="journal article" date="1988" name="Virology">
        <title>The genome of budgerigar fledgling disease virus, an avian polyomavirus.</title>
        <authorList>
            <person name="Rott O."/>
            <person name="Kroeger M."/>
            <person name="Mueller H."/>
            <person name="Hobom G."/>
        </authorList>
    </citation>
    <scope>NUCLEOTIDE SEQUENCE [GENOMIC DNA]</scope>
</reference>
<feature type="chain" id="PRO_0000115051" description="Small t antigen">
    <location>
        <begin position="1"/>
        <end position="145"/>
    </location>
</feature>
<feature type="domain" description="J" evidence="2">
    <location>
        <begin position="6"/>
        <end position="82"/>
    </location>
</feature>
<feature type="region of interest" description="Disordered" evidence="3">
    <location>
        <begin position="58"/>
        <end position="80"/>
    </location>
</feature>
<feature type="compositionally biased region" description="Acidic residues" evidence="3">
    <location>
        <begin position="65"/>
        <end position="75"/>
    </location>
</feature>
<accession>P13895</accession>
<sequence length="145" mass="16988">MASLRRLTELLCLPVTATAADIKTAYRRTALKYHPDKGGDEEKMKELNTLMEEFRETEGLRADETLEDSDPEPEESGYATFENVSVPDIDGAFFKLMKLKKCMQTYFSVNERRKQDIRPEYFELFKAFQDVPWKVLEDFFTSEMF</sequence>
<dbReference type="EMBL" id="M20775">
    <property type="protein sequence ID" value="AAB59761.1"/>
    <property type="molecule type" value="Genomic_DNA"/>
</dbReference>
<dbReference type="PIR" id="E29194">
    <property type="entry name" value="TVVPBD"/>
</dbReference>
<dbReference type="SMR" id="P13895"/>
<dbReference type="Proteomes" id="UP000134051">
    <property type="component" value="Genome"/>
</dbReference>
<dbReference type="GO" id="GO:0030430">
    <property type="term" value="C:host cell cytoplasm"/>
    <property type="evidence" value="ECO:0007669"/>
    <property type="project" value="UniProtKB-SubCell"/>
</dbReference>
<dbReference type="GO" id="GO:0042025">
    <property type="term" value="C:host cell nucleus"/>
    <property type="evidence" value="ECO:0007669"/>
    <property type="project" value="UniProtKB-SubCell"/>
</dbReference>
<dbReference type="CDD" id="cd06257">
    <property type="entry name" value="DnaJ"/>
    <property type="match status" value="1"/>
</dbReference>
<dbReference type="Gene3D" id="1.10.287.110">
    <property type="entry name" value="DnaJ domain"/>
    <property type="match status" value="1"/>
</dbReference>
<dbReference type="InterPro" id="IPR001623">
    <property type="entry name" value="DnaJ_domain"/>
</dbReference>
<dbReference type="InterPro" id="IPR036869">
    <property type="entry name" value="J_dom_sf"/>
</dbReference>
<dbReference type="Pfam" id="PF00226">
    <property type="entry name" value="DnaJ"/>
    <property type="match status" value="1"/>
</dbReference>
<dbReference type="PRINTS" id="PR00625">
    <property type="entry name" value="JDOMAIN"/>
</dbReference>
<dbReference type="SMART" id="SM00271">
    <property type="entry name" value="DnaJ"/>
    <property type="match status" value="1"/>
</dbReference>
<dbReference type="SUPFAM" id="SSF46565">
    <property type="entry name" value="Chaperone J-domain"/>
    <property type="match status" value="1"/>
</dbReference>
<dbReference type="PROSITE" id="PS50076">
    <property type="entry name" value="DNAJ_2"/>
    <property type="match status" value="1"/>
</dbReference>
<evidence type="ECO:0000250" key="1"/>
<evidence type="ECO:0000255" key="2">
    <source>
        <dbReference type="PROSITE-ProRule" id="PRU00286"/>
    </source>
</evidence>
<evidence type="ECO:0000256" key="3">
    <source>
        <dbReference type="SAM" id="MobiDB-lite"/>
    </source>
</evidence>
<organism>
    <name type="scientific">Budgerigar fledgling disease virus</name>
    <name type="common">BFPyV</name>
    <name type="synonym">Aves polyomavirus 1</name>
    <dbReference type="NCBI Taxonomy" id="1891747"/>
    <lineage>
        <taxon>Viruses</taxon>
        <taxon>Monodnaviria</taxon>
        <taxon>Shotokuvirae</taxon>
        <taxon>Cossaviricota</taxon>
        <taxon>Papovaviricetes</taxon>
        <taxon>Sepolyvirales</taxon>
        <taxon>Polyomaviridae</taxon>
        <taxon>Gammapolyomavirus</taxon>
    </lineage>
</organism>
<name>ST_BFPYV</name>
<comment type="function">
    <text evidence="1">Promotes efficient viral genome replication by accelerating both G1 and S phase progression of the cell cycle.</text>
</comment>
<comment type="subunit">
    <text evidence="1">Interacts with host PPP2R1A; the interaction inhibits PP2A activity.</text>
</comment>
<comment type="subcellular location">
    <subcellularLocation>
        <location>Host cytoplasm</location>
    </subcellularLocation>
    <subcellularLocation>
        <location evidence="1">Host nucleus</location>
    </subcellularLocation>
</comment>
<comment type="alternative products">
    <event type="alternative splicing"/>
    <isoform>
        <id>P13895-1</id>
        <name>Small t antigen</name>
        <sequence type="displayed"/>
    </isoform>
    <isoform>
        <id>P13894-1</id>
        <name>Large T antigen</name>
        <sequence type="external"/>
    </isoform>
</comment>
<comment type="domain">
    <text evidence="1">The common region of ST and LT proteins comprises the J domain. This domain is essential for multiple viral activities, including virion assembly, viral DNA replication, transformation and transcriptional activation. This domain is also required for cyclin A-transactivating activity of ST (By similarity).</text>
</comment>
<keyword id="KW-0010">Activator</keyword>
<keyword id="KW-0025">Alternative splicing</keyword>
<keyword id="KW-0244">Early protein</keyword>
<keyword id="KW-1035">Host cytoplasm</keyword>
<keyword id="KW-1048">Host nucleus</keyword>
<keyword id="KW-0945">Host-virus interaction</keyword>
<keyword id="KW-0553">Oncogene</keyword>
<keyword id="KW-0597">Phosphoprotein</keyword>
<keyword id="KW-1185">Reference proteome</keyword>
<keyword id="KW-0804">Transcription</keyword>
<keyword id="KW-0805">Transcription regulation</keyword>
<protein>
    <recommendedName>
        <fullName>Small t antigen</fullName>
        <shortName>ST</shortName>
        <shortName>ST-AG</shortName>
    </recommendedName>
</protein>
<organismHost>
    <name type="scientific">Psittacidae</name>
    <name type="common">parrots</name>
    <dbReference type="NCBI Taxonomy" id="9224"/>
</organismHost>